<comment type="function">
    <text evidence="1">Catalyzes the cleavage of 5-oxoproline to form L-glutamate coupled to the hydrolysis of ATP to ADP and inorganic phosphate.</text>
</comment>
<comment type="catalytic activity">
    <reaction evidence="1">
        <text>5-oxo-L-proline + ATP + 2 H2O = L-glutamate + ADP + phosphate + H(+)</text>
        <dbReference type="Rhea" id="RHEA:10348"/>
        <dbReference type="ChEBI" id="CHEBI:15377"/>
        <dbReference type="ChEBI" id="CHEBI:15378"/>
        <dbReference type="ChEBI" id="CHEBI:29985"/>
        <dbReference type="ChEBI" id="CHEBI:30616"/>
        <dbReference type="ChEBI" id="CHEBI:43474"/>
        <dbReference type="ChEBI" id="CHEBI:58402"/>
        <dbReference type="ChEBI" id="CHEBI:456216"/>
        <dbReference type="EC" id="3.5.2.9"/>
    </reaction>
</comment>
<comment type="subunit">
    <text evidence="1">Forms a complex composed of PxpA, PxpB and PxpC.</text>
</comment>
<comment type="similarity">
    <text evidence="1">Belongs to the LamB/PxpA family.</text>
</comment>
<evidence type="ECO:0000255" key="1">
    <source>
        <dbReference type="HAMAP-Rule" id="MF_00691"/>
    </source>
</evidence>
<gene>
    <name evidence="1" type="primary">pxpA</name>
    <name type="ordered locus">SSP1157</name>
</gene>
<name>PXPA_STAS1</name>
<accession>Q49Y42</accession>
<proteinExistence type="inferred from homology"/>
<feature type="chain" id="PRO_1000045229" description="5-oxoprolinase subunit A">
    <location>
        <begin position="1"/>
        <end position="252"/>
    </location>
</feature>
<dbReference type="EC" id="3.5.2.9" evidence="1"/>
<dbReference type="EMBL" id="AP008934">
    <property type="protein sequence ID" value="BAE18302.1"/>
    <property type="molecule type" value="Genomic_DNA"/>
</dbReference>
<dbReference type="RefSeq" id="WP_011302978.1">
    <property type="nucleotide sequence ID" value="NZ_MTGA01000038.1"/>
</dbReference>
<dbReference type="SMR" id="Q49Y42"/>
<dbReference type="GeneID" id="3617041"/>
<dbReference type="KEGG" id="ssp:SSP1157"/>
<dbReference type="PATRIC" id="fig|342451.11.peg.1155"/>
<dbReference type="eggNOG" id="COG1540">
    <property type="taxonomic scope" value="Bacteria"/>
</dbReference>
<dbReference type="HOGENOM" id="CLU_069535_0_0_9"/>
<dbReference type="OrthoDB" id="9773478at2"/>
<dbReference type="Proteomes" id="UP000006371">
    <property type="component" value="Chromosome"/>
</dbReference>
<dbReference type="GO" id="GO:0017168">
    <property type="term" value="F:5-oxoprolinase (ATP-hydrolyzing) activity"/>
    <property type="evidence" value="ECO:0007669"/>
    <property type="project" value="UniProtKB-UniRule"/>
</dbReference>
<dbReference type="GO" id="GO:0005524">
    <property type="term" value="F:ATP binding"/>
    <property type="evidence" value="ECO:0007669"/>
    <property type="project" value="UniProtKB-UniRule"/>
</dbReference>
<dbReference type="GO" id="GO:0005975">
    <property type="term" value="P:carbohydrate metabolic process"/>
    <property type="evidence" value="ECO:0007669"/>
    <property type="project" value="InterPro"/>
</dbReference>
<dbReference type="CDD" id="cd10787">
    <property type="entry name" value="LamB_YcsF_like"/>
    <property type="match status" value="1"/>
</dbReference>
<dbReference type="Gene3D" id="3.20.20.370">
    <property type="entry name" value="Glycoside hydrolase/deacetylase"/>
    <property type="match status" value="1"/>
</dbReference>
<dbReference type="HAMAP" id="MF_00691">
    <property type="entry name" value="PxpA"/>
    <property type="match status" value="1"/>
</dbReference>
<dbReference type="InterPro" id="IPR011330">
    <property type="entry name" value="Glyco_hydro/deAcase_b/a-brl"/>
</dbReference>
<dbReference type="InterPro" id="IPR005501">
    <property type="entry name" value="LamB/YcsF/PxpA-like"/>
</dbReference>
<dbReference type="NCBIfam" id="NF003813">
    <property type="entry name" value="PRK05406.1-2"/>
    <property type="match status" value="1"/>
</dbReference>
<dbReference type="NCBIfam" id="NF003814">
    <property type="entry name" value="PRK05406.1-3"/>
    <property type="match status" value="1"/>
</dbReference>
<dbReference type="NCBIfam" id="NF003816">
    <property type="entry name" value="PRK05406.1-5"/>
    <property type="match status" value="1"/>
</dbReference>
<dbReference type="PANTHER" id="PTHR30292:SF0">
    <property type="entry name" value="5-OXOPROLINASE SUBUNIT A"/>
    <property type="match status" value="1"/>
</dbReference>
<dbReference type="PANTHER" id="PTHR30292">
    <property type="entry name" value="UNCHARACTERIZED PROTEIN YBGL-RELATED"/>
    <property type="match status" value="1"/>
</dbReference>
<dbReference type="Pfam" id="PF03746">
    <property type="entry name" value="LamB_YcsF"/>
    <property type="match status" value="1"/>
</dbReference>
<dbReference type="SUPFAM" id="SSF88713">
    <property type="entry name" value="Glycoside hydrolase/deacetylase"/>
    <property type="match status" value="1"/>
</dbReference>
<sequence length="252" mass="27408">MKVDLNCDLGEAFGNYSFGGDNQIIPLITSANIACGFHAGDQHVMNDTIKLAKDNGIGIGAHPGLPDLQGFGRRNMDLSPEEVYDIVVYQLGALNGFCRIHDVKINHVKPHGALYQMGARDKVIAHAIAKAVYDFDPTLIYVGLSNTLLISEAQALGLSTASEVFADRRYEDDGQLVSRKEADALITNTDEAIKQVINMVKFQKVITKNNNTIDIKADTICVHGDGAHAIEFVTQIREQLTKEGISITRLGG</sequence>
<reference key="1">
    <citation type="journal article" date="2005" name="Proc. Natl. Acad. Sci. U.S.A.">
        <title>Whole genome sequence of Staphylococcus saprophyticus reveals the pathogenesis of uncomplicated urinary tract infection.</title>
        <authorList>
            <person name="Kuroda M."/>
            <person name="Yamashita A."/>
            <person name="Hirakawa H."/>
            <person name="Kumano M."/>
            <person name="Morikawa K."/>
            <person name="Higashide M."/>
            <person name="Maruyama A."/>
            <person name="Inose Y."/>
            <person name="Matoba K."/>
            <person name="Toh H."/>
            <person name="Kuhara S."/>
            <person name="Hattori M."/>
            <person name="Ohta T."/>
        </authorList>
    </citation>
    <scope>NUCLEOTIDE SEQUENCE [LARGE SCALE GENOMIC DNA]</scope>
    <source>
        <strain>ATCC 15305 / DSM 20229 / NCIMB 8711 / NCTC 7292 / S-41</strain>
    </source>
</reference>
<keyword id="KW-0067">ATP-binding</keyword>
<keyword id="KW-0378">Hydrolase</keyword>
<keyword id="KW-0547">Nucleotide-binding</keyword>
<keyword id="KW-1185">Reference proteome</keyword>
<protein>
    <recommendedName>
        <fullName evidence="1">5-oxoprolinase subunit A</fullName>
        <shortName evidence="1">5-OPase subunit A</shortName>
        <ecNumber evidence="1">3.5.2.9</ecNumber>
    </recommendedName>
    <alternativeName>
        <fullName evidence="1">5-oxoprolinase (ATP-hydrolyzing) subunit A</fullName>
    </alternativeName>
</protein>
<organism>
    <name type="scientific">Staphylococcus saprophyticus subsp. saprophyticus (strain ATCC 15305 / DSM 20229 / NCIMB 8711 / NCTC 7292 / S-41)</name>
    <dbReference type="NCBI Taxonomy" id="342451"/>
    <lineage>
        <taxon>Bacteria</taxon>
        <taxon>Bacillati</taxon>
        <taxon>Bacillota</taxon>
        <taxon>Bacilli</taxon>
        <taxon>Bacillales</taxon>
        <taxon>Staphylococcaceae</taxon>
        <taxon>Staphylococcus</taxon>
    </lineage>
</organism>